<dbReference type="EC" id="1.17.1.8" evidence="1"/>
<dbReference type="EMBL" id="CP001124">
    <property type="protein sequence ID" value="ACH41043.1"/>
    <property type="molecule type" value="Genomic_DNA"/>
</dbReference>
<dbReference type="RefSeq" id="WP_012532480.1">
    <property type="nucleotide sequence ID" value="NC_011146.1"/>
</dbReference>
<dbReference type="SMR" id="B5EGX3"/>
<dbReference type="STRING" id="404380.Gbem_4053"/>
<dbReference type="KEGG" id="gbm:Gbem_4053"/>
<dbReference type="eggNOG" id="COG0289">
    <property type="taxonomic scope" value="Bacteria"/>
</dbReference>
<dbReference type="HOGENOM" id="CLU_047479_2_1_7"/>
<dbReference type="OrthoDB" id="9790352at2"/>
<dbReference type="UniPathway" id="UPA00034">
    <property type="reaction ID" value="UER00018"/>
</dbReference>
<dbReference type="Proteomes" id="UP000008825">
    <property type="component" value="Chromosome"/>
</dbReference>
<dbReference type="GO" id="GO:0005829">
    <property type="term" value="C:cytosol"/>
    <property type="evidence" value="ECO:0007669"/>
    <property type="project" value="TreeGrafter"/>
</dbReference>
<dbReference type="GO" id="GO:0008839">
    <property type="term" value="F:4-hydroxy-tetrahydrodipicolinate reductase"/>
    <property type="evidence" value="ECO:0007669"/>
    <property type="project" value="UniProtKB-EC"/>
</dbReference>
<dbReference type="GO" id="GO:0051287">
    <property type="term" value="F:NAD binding"/>
    <property type="evidence" value="ECO:0007669"/>
    <property type="project" value="UniProtKB-UniRule"/>
</dbReference>
<dbReference type="GO" id="GO:0050661">
    <property type="term" value="F:NADP binding"/>
    <property type="evidence" value="ECO:0007669"/>
    <property type="project" value="UniProtKB-UniRule"/>
</dbReference>
<dbReference type="GO" id="GO:0016726">
    <property type="term" value="F:oxidoreductase activity, acting on CH or CH2 groups, NAD or NADP as acceptor"/>
    <property type="evidence" value="ECO:0007669"/>
    <property type="project" value="UniProtKB-UniRule"/>
</dbReference>
<dbReference type="GO" id="GO:0019877">
    <property type="term" value="P:diaminopimelate biosynthetic process"/>
    <property type="evidence" value="ECO:0007669"/>
    <property type="project" value="UniProtKB-UniRule"/>
</dbReference>
<dbReference type="GO" id="GO:0009089">
    <property type="term" value="P:lysine biosynthetic process via diaminopimelate"/>
    <property type="evidence" value="ECO:0007669"/>
    <property type="project" value="UniProtKB-UniRule"/>
</dbReference>
<dbReference type="CDD" id="cd02274">
    <property type="entry name" value="DHDPR_N"/>
    <property type="match status" value="1"/>
</dbReference>
<dbReference type="FunFam" id="3.30.360.10:FF:000004">
    <property type="entry name" value="4-hydroxy-tetrahydrodipicolinate reductase"/>
    <property type="match status" value="1"/>
</dbReference>
<dbReference type="FunFam" id="3.40.50.720:FF:000048">
    <property type="entry name" value="4-hydroxy-tetrahydrodipicolinate reductase"/>
    <property type="match status" value="1"/>
</dbReference>
<dbReference type="Gene3D" id="3.30.360.10">
    <property type="entry name" value="Dihydrodipicolinate Reductase, domain 2"/>
    <property type="match status" value="1"/>
</dbReference>
<dbReference type="Gene3D" id="3.40.50.720">
    <property type="entry name" value="NAD(P)-binding Rossmann-like Domain"/>
    <property type="match status" value="1"/>
</dbReference>
<dbReference type="HAMAP" id="MF_00102">
    <property type="entry name" value="DapB"/>
    <property type="match status" value="1"/>
</dbReference>
<dbReference type="InterPro" id="IPR022663">
    <property type="entry name" value="DapB_C"/>
</dbReference>
<dbReference type="InterPro" id="IPR000846">
    <property type="entry name" value="DapB_N"/>
</dbReference>
<dbReference type="InterPro" id="IPR022664">
    <property type="entry name" value="DapB_N_CS"/>
</dbReference>
<dbReference type="InterPro" id="IPR023940">
    <property type="entry name" value="DHDPR_bac"/>
</dbReference>
<dbReference type="InterPro" id="IPR036291">
    <property type="entry name" value="NAD(P)-bd_dom_sf"/>
</dbReference>
<dbReference type="NCBIfam" id="TIGR00036">
    <property type="entry name" value="dapB"/>
    <property type="match status" value="1"/>
</dbReference>
<dbReference type="PANTHER" id="PTHR20836:SF0">
    <property type="entry name" value="4-HYDROXY-TETRAHYDRODIPICOLINATE REDUCTASE 1, CHLOROPLASTIC-RELATED"/>
    <property type="match status" value="1"/>
</dbReference>
<dbReference type="PANTHER" id="PTHR20836">
    <property type="entry name" value="DIHYDRODIPICOLINATE REDUCTASE"/>
    <property type="match status" value="1"/>
</dbReference>
<dbReference type="Pfam" id="PF05173">
    <property type="entry name" value="DapB_C"/>
    <property type="match status" value="1"/>
</dbReference>
<dbReference type="Pfam" id="PF01113">
    <property type="entry name" value="DapB_N"/>
    <property type="match status" value="1"/>
</dbReference>
<dbReference type="PIRSF" id="PIRSF000161">
    <property type="entry name" value="DHPR"/>
    <property type="match status" value="1"/>
</dbReference>
<dbReference type="SUPFAM" id="SSF55347">
    <property type="entry name" value="Glyceraldehyde-3-phosphate dehydrogenase-like, C-terminal domain"/>
    <property type="match status" value="1"/>
</dbReference>
<dbReference type="SUPFAM" id="SSF51735">
    <property type="entry name" value="NAD(P)-binding Rossmann-fold domains"/>
    <property type="match status" value="1"/>
</dbReference>
<dbReference type="PROSITE" id="PS01298">
    <property type="entry name" value="DAPB"/>
    <property type="match status" value="1"/>
</dbReference>
<protein>
    <recommendedName>
        <fullName evidence="1">4-hydroxy-tetrahydrodipicolinate reductase</fullName>
        <shortName evidence="1">HTPA reductase</shortName>
        <ecNumber evidence="1">1.17.1.8</ecNumber>
    </recommendedName>
</protein>
<proteinExistence type="inferred from homology"/>
<feature type="chain" id="PRO_1000093971" description="4-hydroxy-tetrahydrodipicolinate reductase">
    <location>
        <begin position="1"/>
        <end position="267"/>
    </location>
</feature>
<feature type="active site" description="Proton donor/acceptor" evidence="1">
    <location>
        <position position="155"/>
    </location>
</feature>
<feature type="active site" description="Proton donor" evidence="1">
    <location>
        <position position="159"/>
    </location>
</feature>
<feature type="binding site" evidence="1">
    <location>
        <begin position="8"/>
        <end position="13"/>
    </location>
    <ligand>
        <name>NAD(+)</name>
        <dbReference type="ChEBI" id="CHEBI:57540"/>
    </ligand>
</feature>
<feature type="binding site" evidence="1">
    <location>
        <position position="34"/>
    </location>
    <ligand>
        <name>NAD(+)</name>
        <dbReference type="ChEBI" id="CHEBI:57540"/>
    </ligand>
</feature>
<feature type="binding site" evidence="1">
    <location>
        <position position="35"/>
    </location>
    <ligand>
        <name>NADP(+)</name>
        <dbReference type="ChEBI" id="CHEBI:58349"/>
    </ligand>
</feature>
<feature type="binding site" evidence="1">
    <location>
        <begin position="98"/>
        <end position="100"/>
    </location>
    <ligand>
        <name>NAD(+)</name>
        <dbReference type="ChEBI" id="CHEBI:57540"/>
    </ligand>
</feature>
<feature type="binding site" evidence="1">
    <location>
        <begin position="122"/>
        <end position="125"/>
    </location>
    <ligand>
        <name>NAD(+)</name>
        <dbReference type="ChEBI" id="CHEBI:57540"/>
    </ligand>
</feature>
<feature type="binding site" evidence="1">
    <location>
        <position position="156"/>
    </location>
    <ligand>
        <name>(S)-2,3,4,5-tetrahydrodipicolinate</name>
        <dbReference type="ChEBI" id="CHEBI:16845"/>
    </ligand>
</feature>
<feature type="binding site" evidence="1">
    <location>
        <begin position="165"/>
        <end position="166"/>
    </location>
    <ligand>
        <name>(S)-2,3,4,5-tetrahydrodipicolinate</name>
        <dbReference type="ChEBI" id="CHEBI:16845"/>
    </ligand>
</feature>
<evidence type="ECO:0000255" key="1">
    <source>
        <dbReference type="HAMAP-Rule" id="MF_00102"/>
    </source>
</evidence>
<evidence type="ECO:0000305" key="2"/>
<accession>B5EGX3</accession>
<organism>
    <name type="scientific">Citrifermentans bemidjiense (strain ATCC BAA-1014 / DSM 16622 / JCM 12645 / Bem)</name>
    <name type="common">Geobacter bemidjiensis</name>
    <dbReference type="NCBI Taxonomy" id="404380"/>
    <lineage>
        <taxon>Bacteria</taxon>
        <taxon>Pseudomonadati</taxon>
        <taxon>Thermodesulfobacteriota</taxon>
        <taxon>Desulfuromonadia</taxon>
        <taxon>Geobacterales</taxon>
        <taxon>Geobacteraceae</taxon>
        <taxon>Citrifermentans</taxon>
    </lineage>
</organism>
<sequence length="267" mass="28427">MVKIAVCGAAGRMGGRIIAAVKEAEGVEICGALERPGHPMVGQDAGYNAGLGAIGVAISDDLNAVVQACDVLIDFTAPKVSLKNLEVCALYGKSIVIGSTGFTPEERALAAELAREIPVIIAPNMSVGVNVCFKVLADVAKILGEDFDVEIVESHHRLKKDSPSGTAVRMGEVVASALGRDYNKVANYHREGICGERTHDEIGMQTVRGGDIVGEHTVYFIGMGERIEITHRAHTRDMFSRGSVRAAKWVVTAKPGVYDMQDVLGLR</sequence>
<gene>
    <name evidence="1" type="primary">dapB</name>
    <name type="ordered locus">Gbem_4053</name>
</gene>
<reference key="1">
    <citation type="submission" date="2008-07" db="EMBL/GenBank/DDBJ databases">
        <title>Complete sequence of Geobacter bemidjiensis BEM.</title>
        <authorList>
            <consortium name="US DOE Joint Genome Institute"/>
            <person name="Lucas S."/>
            <person name="Copeland A."/>
            <person name="Lapidus A."/>
            <person name="Glavina del Rio T."/>
            <person name="Dalin E."/>
            <person name="Tice H."/>
            <person name="Bruce D."/>
            <person name="Goodwin L."/>
            <person name="Pitluck S."/>
            <person name="Kiss H."/>
            <person name="Brettin T."/>
            <person name="Detter J.C."/>
            <person name="Han C."/>
            <person name="Kuske C.R."/>
            <person name="Schmutz J."/>
            <person name="Larimer F."/>
            <person name="Land M."/>
            <person name="Hauser L."/>
            <person name="Kyrpides N."/>
            <person name="Lykidis A."/>
            <person name="Lovley D."/>
            <person name="Richardson P."/>
        </authorList>
    </citation>
    <scope>NUCLEOTIDE SEQUENCE [LARGE SCALE GENOMIC DNA]</scope>
    <source>
        <strain>ATCC BAA-1014 / DSM 16622 / JCM 12645 / Bem</strain>
    </source>
</reference>
<comment type="function">
    <text evidence="1">Catalyzes the conversion of 4-hydroxy-tetrahydrodipicolinate (HTPA) to tetrahydrodipicolinate.</text>
</comment>
<comment type="catalytic activity">
    <reaction evidence="1">
        <text>(S)-2,3,4,5-tetrahydrodipicolinate + NAD(+) + H2O = (2S,4S)-4-hydroxy-2,3,4,5-tetrahydrodipicolinate + NADH + H(+)</text>
        <dbReference type="Rhea" id="RHEA:35323"/>
        <dbReference type="ChEBI" id="CHEBI:15377"/>
        <dbReference type="ChEBI" id="CHEBI:15378"/>
        <dbReference type="ChEBI" id="CHEBI:16845"/>
        <dbReference type="ChEBI" id="CHEBI:57540"/>
        <dbReference type="ChEBI" id="CHEBI:57945"/>
        <dbReference type="ChEBI" id="CHEBI:67139"/>
        <dbReference type="EC" id="1.17.1.8"/>
    </reaction>
</comment>
<comment type="catalytic activity">
    <reaction evidence="1">
        <text>(S)-2,3,4,5-tetrahydrodipicolinate + NADP(+) + H2O = (2S,4S)-4-hydroxy-2,3,4,5-tetrahydrodipicolinate + NADPH + H(+)</text>
        <dbReference type="Rhea" id="RHEA:35331"/>
        <dbReference type="ChEBI" id="CHEBI:15377"/>
        <dbReference type="ChEBI" id="CHEBI:15378"/>
        <dbReference type="ChEBI" id="CHEBI:16845"/>
        <dbReference type="ChEBI" id="CHEBI:57783"/>
        <dbReference type="ChEBI" id="CHEBI:58349"/>
        <dbReference type="ChEBI" id="CHEBI:67139"/>
        <dbReference type="EC" id="1.17.1.8"/>
    </reaction>
</comment>
<comment type="pathway">
    <text evidence="1">Amino-acid biosynthesis; L-lysine biosynthesis via DAP pathway; (S)-tetrahydrodipicolinate from L-aspartate: step 4/4.</text>
</comment>
<comment type="subcellular location">
    <subcellularLocation>
        <location evidence="1">Cytoplasm</location>
    </subcellularLocation>
</comment>
<comment type="similarity">
    <text evidence="1">Belongs to the DapB family.</text>
</comment>
<comment type="caution">
    <text evidence="2">Was originally thought to be a dihydrodipicolinate reductase (DHDPR), catalyzing the conversion of dihydrodipicolinate to tetrahydrodipicolinate. However, it was shown in E.coli that the substrate of the enzymatic reaction is not dihydrodipicolinate (DHDP) but in fact (2S,4S)-4-hydroxy-2,3,4,5-tetrahydrodipicolinic acid (HTPA), the product released by the DapA-catalyzed reaction.</text>
</comment>
<name>DAPB_CITBB</name>
<keyword id="KW-0028">Amino-acid biosynthesis</keyword>
<keyword id="KW-0963">Cytoplasm</keyword>
<keyword id="KW-0220">Diaminopimelate biosynthesis</keyword>
<keyword id="KW-0457">Lysine biosynthesis</keyword>
<keyword id="KW-0520">NAD</keyword>
<keyword id="KW-0521">NADP</keyword>
<keyword id="KW-0560">Oxidoreductase</keyword>
<keyword id="KW-1185">Reference proteome</keyword>